<sequence>MSQCVDGIKHLCTSVLGCFDLDLYKQSGGLGDPELLARDTVFSVSEIEALYELFKKISSAVIDDGLINKEEFQLALFKTNKKESLFADRVFDLFDTKHNGILGFEEFARALSVFHPNAPIDDKIHFSFQLYDLKQQGFIERQEVKQMVVATLAESGMNLKDTVIEDIIDKTFEEADTKHDGKIDKEEWRSLVLRHPSLLKNMTLQYLKDITTTFPSFVFHSQVEDT</sequence>
<dbReference type="EMBL" id="AF076252">
    <property type="protein sequence ID" value="AAC26009.1"/>
    <property type="molecule type" value="mRNA"/>
</dbReference>
<dbReference type="EMBL" id="AB011476">
    <property type="protein sequence ID" value="BAB09281.1"/>
    <property type="molecule type" value="Genomic_DNA"/>
</dbReference>
<dbReference type="EMBL" id="CP002688">
    <property type="protein sequence ID" value="AED96707.1"/>
    <property type="molecule type" value="Genomic_DNA"/>
</dbReference>
<dbReference type="EMBL" id="CP002688">
    <property type="protein sequence ID" value="ANM71100.1"/>
    <property type="molecule type" value="Genomic_DNA"/>
</dbReference>
<dbReference type="EMBL" id="AY052304">
    <property type="protein sequence ID" value="AAK96497.1"/>
    <property type="molecule type" value="mRNA"/>
</dbReference>
<dbReference type="EMBL" id="AY139808">
    <property type="protein sequence ID" value="AAM98114.1"/>
    <property type="molecule type" value="mRNA"/>
</dbReference>
<dbReference type="EMBL" id="AY087638">
    <property type="protein sequence ID" value="AAM65177.1"/>
    <property type="molecule type" value="mRNA"/>
</dbReference>
<dbReference type="PIR" id="T51357">
    <property type="entry name" value="T51357"/>
</dbReference>
<dbReference type="RefSeq" id="NP_001332655.1">
    <property type="nucleotide sequence ID" value="NM_001345176.1"/>
</dbReference>
<dbReference type="RefSeq" id="NP_200410.1">
    <property type="nucleotide sequence ID" value="NM_124981.4"/>
</dbReference>
<dbReference type="PDB" id="1UHN">
    <property type="method" value="X-ray"/>
    <property type="resolution" value="2.10 A"/>
    <property type="chains" value="A=32-220"/>
</dbReference>
<dbReference type="PDB" id="2ZFD">
    <property type="method" value="X-ray"/>
    <property type="resolution" value="1.20 A"/>
    <property type="chains" value="A=1-226"/>
</dbReference>
<dbReference type="PDBsum" id="1UHN"/>
<dbReference type="PDBsum" id="2ZFD"/>
<dbReference type="SMR" id="Q8LAS7"/>
<dbReference type="BioGRID" id="20941">
    <property type="interactions" value="20"/>
</dbReference>
<dbReference type="DIP" id="DIP-32474N"/>
<dbReference type="FunCoup" id="Q8LAS7">
    <property type="interactions" value="650"/>
</dbReference>
<dbReference type="IntAct" id="Q8LAS7">
    <property type="interactions" value="19"/>
</dbReference>
<dbReference type="STRING" id="3702.Q8LAS7"/>
<dbReference type="iPTMnet" id="Q8LAS7"/>
<dbReference type="SwissPalm" id="Q8LAS7"/>
<dbReference type="PaxDb" id="3702-AT5G55990.1"/>
<dbReference type="ProteomicsDB" id="220478"/>
<dbReference type="EnsemblPlants" id="AT5G55990.1">
    <property type="protein sequence ID" value="AT5G55990.1"/>
    <property type="gene ID" value="AT5G55990"/>
</dbReference>
<dbReference type="EnsemblPlants" id="AT5G55990.2">
    <property type="protein sequence ID" value="AT5G55990.2"/>
    <property type="gene ID" value="AT5G55990"/>
</dbReference>
<dbReference type="GeneID" id="835697"/>
<dbReference type="Gramene" id="AT5G55990.1">
    <property type="protein sequence ID" value="AT5G55990.1"/>
    <property type="gene ID" value="AT5G55990"/>
</dbReference>
<dbReference type="Gramene" id="AT5G55990.2">
    <property type="protein sequence ID" value="AT5G55990.2"/>
    <property type="gene ID" value="AT5G55990"/>
</dbReference>
<dbReference type="KEGG" id="ath:AT5G55990"/>
<dbReference type="Araport" id="AT5G55990"/>
<dbReference type="TAIR" id="AT5G55990">
    <property type="gene designation" value="CBL2"/>
</dbReference>
<dbReference type="eggNOG" id="KOG0034">
    <property type="taxonomic scope" value="Eukaryota"/>
</dbReference>
<dbReference type="HOGENOM" id="CLU_061288_21_0_1"/>
<dbReference type="InParanoid" id="Q8LAS7"/>
<dbReference type="OMA" id="KCCDLDV"/>
<dbReference type="PhylomeDB" id="Q8LAS7"/>
<dbReference type="EvolutionaryTrace" id="Q8LAS7"/>
<dbReference type="PRO" id="PR:Q8LAS7"/>
<dbReference type="Proteomes" id="UP000006548">
    <property type="component" value="Chromosome 5"/>
</dbReference>
<dbReference type="ExpressionAtlas" id="Q8LAS7">
    <property type="expression patterns" value="baseline and differential"/>
</dbReference>
<dbReference type="GO" id="GO:0022626">
    <property type="term" value="C:cytosolic ribosome"/>
    <property type="evidence" value="ECO:0007005"/>
    <property type="project" value="TAIR"/>
</dbReference>
<dbReference type="GO" id="GO:0016020">
    <property type="term" value="C:membrane"/>
    <property type="evidence" value="ECO:0000314"/>
    <property type="project" value="TAIR"/>
</dbReference>
<dbReference type="GO" id="GO:0000325">
    <property type="term" value="C:plant-type vacuole"/>
    <property type="evidence" value="ECO:0007005"/>
    <property type="project" value="TAIR"/>
</dbReference>
<dbReference type="GO" id="GO:0009705">
    <property type="term" value="C:plant-type vacuole membrane"/>
    <property type="evidence" value="ECO:0000314"/>
    <property type="project" value="TAIR"/>
</dbReference>
<dbReference type="GO" id="GO:0009536">
    <property type="term" value="C:plastid"/>
    <property type="evidence" value="ECO:0007005"/>
    <property type="project" value="TAIR"/>
</dbReference>
<dbReference type="GO" id="GO:0005773">
    <property type="term" value="C:vacuole"/>
    <property type="evidence" value="ECO:0007005"/>
    <property type="project" value="TAIR"/>
</dbReference>
<dbReference type="GO" id="GO:0005509">
    <property type="term" value="F:calcium ion binding"/>
    <property type="evidence" value="ECO:0000250"/>
    <property type="project" value="TAIR"/>
</dbReference>
<dbReference type="GO" id="GO:0019900">
    <property type="term" value="F:kinase binding"/>
    <property type="evidence" value="ECO:0000353"/>
    <property type="project" value="UniProtKB"/>
</dbReference>
<dbReference type="GO" id="GO:0019722">
    <property type="term" value="P:calcium-mediated signaling"/>
    <property type="evidence" value="ECO:0000304"/>
    <property type="project" value="TAIR"/>
</dbReference>
<dbReference type="GO" id="GO:0055075">
    <property type="term" value="P:potassium ion homeostasis"/>
    <property type="evidence" value="ECO:0000315"/>
    <property type="project" value="TAIR"/>
</dbReference>
<dbReference type="CDD" id="cd00051">
    <property type="entry name" value="EFh"/>
    <property type="match status" value="1"/>
</dbReference>
<dbReference type="FunFam" id="1.10.238.10:FF:000073">
    <property type="entry name" value="calcineurin B-like protein 3"/>
    <property type="match status" value="1"/>
</dbReference>
<dbReference type="Gene3D" id="1.10.238.10">
    <property type="entry name" value="EF-hand"/>
    <property type="match status" value="1"/>
</dbReference>
<dbReference type="InterPro" id="IPR045198">
    <property type="entry name" value="CNBL1-10"/>
</dbReference>
<dbReference type="InterPro" id="IPR011992">
    <property type="entry name" value="EF-hand-dom_pair"/>
</dbReference>
<dbReference type="InterPro" id="IPR002048">
    <property type="entry name" value="EF_hand_dom"/>
</dbReference>
<dbReference type="PANTHER" id="PTHR23056">
    <property type="entry name" value="CALCINEURIN B"/>
    <property type="match status" value="1"/>
</dbReference>
<dbReference type="PANTHER" id="PTHR23056:SF148">
    <property type="entry name" value="CALCINEURIN B-LIKE PROTEIN 2"/>
    <property type="match status" value="1"/>
</dbReference>
<dbReference type="Pfam" id="PF13202">
    <property type="entry name" value="EF-hand_5"/>
    <property type="match status" value="1"/>
</dbReference>
<dbReference type="Pfam" id="PF13833">
    <property type="entry name" value="EF-hand_8"/>
    <property type="match status" value="1"/>
</dbReference>
<dbReference type="PRINTS" id="PR00450">
    <property type="entry name" value="RECOVERIN"/>
</dbReference>
<dbReference type="SMART" id="SM00054">
    <property type="entry name" value="EFh"/>
    <property type="match status" value="3"/>
</dbReference>
<dbReference type="SUPFAM" id="SSF47473">
    <property type="entry name" value="EF-hand"/>
    <property type="match status" value="1"/>
</dbReference>
<dbReference type="PROSITE" id="PS50222">
    <property type="entry name" value="EF_HAND_2"/>
    <property type="match status" value="3"/>
</dbReference>
<protein>
    <recommendedName>
        <fullName>Calcineurin B-like protein 2</fullName>
    </recommendedName>
    <alternativeName>
        <fullName>SOS3-like calcium-binding protein 1</fullName>
    </alternativeName>
</protein>
<evidence type="ECO:0000250" key="1"/>
<evidence type="ECO:0000255" key="2">
    <source>
        <dbReference type="PROSITE-ProRule" id="PRU00448"/>
    </source>
</evidence>
<evidence type="ECO:0000269" key="3">
    <source>
    </source>
</evidence>
<evidence type="ECO:0000269" key="4">
    <source>
    </source>
</evidence>
<evidence type="ECO:0000269" key="5">
    <source>
    </source>
</evidence>
<evidence type="ECO:0000269" key="6">
    <source>
    </source>
</evidence>
<evidence type="ECO:0000269" key="7">
    <source>
    </source>
</evidence>
<evidence type="ECO:0000269" key="8">
    <source>
    </source>
</evidence>
<evidence type="ECO:0000269" key="9">
    <source>
    </source>
</evidence>
<evidence type="ECO:0000269" key="10">
    <source>
    </source>
</evidence>
<evidence type="ECO:0000269" key="11">
    <source>
    </source>
</evidence>
<evidence type="ECO:0000269" key="12">
    <source>
    </source>
</evidence>
<evidence type="ECO:0000269" key="13">
    <source>
    </source>
</evidence>
<evidence type="ECO:0000269" key="14">
    <source>
    </source>
</evidence>
<evidence type="ECO:0000269" key="15">
    <source>
    </source>
</evidence>
<evidence type="ECO:0000269" key="16">
    <source>
    </source>
</evidence>
<evidence type="ECO:0000269" key="17">
    <source>
    </source>
</evidence>
<evidence type="ECO:0000269" key="18">
    <source>
    </source>
</evidence>
<evidence type="ECO:0000269" key="19">
    <source>
    </source>
</evidence>
<evidence type="ECO:0000305" key="20"/>
<evidence type="ECO:0007829" key="21">
    <source>
        <dbReference type="PDB" id="1UHN"/>
    </source>
</evidence>
<evidence type="ECO:0007829" key="22">
    <source>
        <dbReference type="PDB" id="2ZFD"/>
    </source>
</evidence>
<name>CNBL2_ARATH</name>
<organism>
    <name type="scientific">Arabidopsis thaliana</name>
    <name type="common">Mouse-ear cress</name>
    <dbReference type="NCBI Taxonomy" id="3702"/>
    <lineage>
        <taxon>Eukaryota</taxon>
        <taxon>Viridiplantae</taxon>
        <taxon>Streptophyta</taxon>
        <taxon>Embryophyta</taxon>
        <taxon>Tracheophyta</taxon>
        <taxon>Spermatophyta</taxon>
        <taxon>Magnoliopsida</taxon>
        <taxon>eudicotyledons</taxon>
        <taxon>Gunneridae</taxon>
        <taxon>Pentapetalae</taxon>
        <taxon>rosids</taxon>
        <taxon>malvids</taxon>
        <taxon>Brassicales</taxon>
        <taxon>Brassicaceae</taxon>
        <taxon>Camelineae</taxon>
        <taxon>Arabidopsis</taxon>
    </lineage>
</organism>
<proteinExistence type="evidence at protein level"/>
<accession>Q8LAS7</accession>
<accession>O81446</accession>
<gene>
    <name type="primary">CBL2</name>
    <name type="synonym">SCABP1</name>
    <name type="ordered locus">At5g55990</name>
    <name type="ORF">MDA7.3</name>
</gene>
<comment type="function">
    <text evidence="8 9 15">Acts as a calcium sensor. CBL proteins interact with CIPK serine-threonine protein kinases. Binding of a CBL protein to the regulatory NAF domain of a CIPK protein lead to the activation of the kinase in a calcium-dependent manner. Binds four calcium ions per subunit. Mediates the activation of AKT1 by CIPK proteins (CIPK6, CIPK16, and CIPK23) in response to low potassium conditions and in the context of stomatal movement. Mediates the inactivation of the proton pump AHA2 by CIPK11. Probably involved in regulating signaling responses to abscisic acid.</text>
</comment>
<comment type="subunit">
    <text evidence="1 4 5 6 7 8 9 10 12 13 14 16 19">Homodimer (By similarity). Part of a K(+)-channel calcium-sensing kinase/phosphatase complex composed by a calcium sensor CBL (CBL1, CBL2, CBL3 or CBL9), a kinase CIPK (CIPK6, CIPK16 or CIPK23), a phosphatase PP2C (AIP1) and a K(+)-channel (AKT1). Interacts with PP2CA, CIPK1, CIPK2, CIPK4, CIPK6, CIPK7, CIPK9, CIPK11, CIPK12, CIPK13, CIPK14/SR1, CIPK16, CIPK23, and CIPK24.</text>
</comment>
<comment type="interaction">
    <interactant intactId="EBI-485991">
        <id>Q8LAS7</id>
    </interactant>
    <interactant intactId="EBI-1748677">
        <id>Q8RWC9</id>
        <label>CIPK1</label>
    </interactant>
    <organismsDiffer>false</organismsDiffer>
    <experiments>4</experiments>
</comment>
<comment type="interaction">
    <interactant intactId="EBI-485991">
        <id>Q8LAS7</id>
    </interactant>
    <interactant intactId="EBI-537638">
        <id>O22932</id>
        <label>CIPK11</label>
    </interactant>
    <organismsDiffer>false</organismsDiffer>
    <experiments>5</experiments>
</comment>
<comment type="interaction">
    <interactant intactId="EBI-485991">
        <id>Q8LAS7</id>
    </interactant>
    <interactant intactId="EBI-637523">
        <id>Q9SN43</id>
        <label>CIPK12</label>
    </interactant>
    <organismsDiffer>false</organismsDiffer>
    <experiments>4</experiments>
</comment>
<comment type="interaction">
    <interactant intactId="EBI-485991">
        <id>Q8LAS7</id>
    </interactant>
    <interactant intactId="EBI-637402">
        <id>O22971</id>
        <label>CIPK13</label>
    </interactant>
    <organismsDiffer>false</organismsDiffer>
    <experiments>4</experiments>
</comment>
<comment type="interaction">
    <interactant intactId="EBI-485991">
        <id>Q8LAS7</id>
    </interactant>
    <interactant intactId="EBI-307576">
        <id>Q9LZW4</id>
        <label>CIPK14</label>
    </interactant>
    <organismsDiffer>false</organismsDiffer>
    <experiments>9</experiments>
</comment>
<comment type="interaction">
    <interactant intactId="EBI-485991">
        <id>Q8LAS7</id>
    </interactant>
    <interactant intactId="EBI-537615">
        <id>O65554</id>
        <label>CIPK6</label>
    </interactant>
    <organismsDiffer>false</organismsDiffer>
    <experiments>3</experiments>
</comment>
<comment type="subcellular location">
    <subcellularLocation>
        <location evidence="11 12 15 16 17 18">Vacuole membrane</location>
        <topology evidence="11 12 15 16 17 18">Lipid-anchor</topology>
    </subcellularLocation>
    <text>The tonoplast localization is S-acylation dependent and is abolished by 2-bromopalmitate (2-BP) treatment.</text>
</comment>
<comment type="tissue specificity">
    <text evidence="3 5 16 17">Ubiquitous. Stronger expression in aerial parts. Expressed in guard cells, meristems and elongation zones of roots, mesophyll cells of leaves, cortex and pith of inflorescence stems and anthers and stamen filaments in flowers.</text>
</comment>
<comment type="developmental stage">
    <text evidence="17">Expressed early during germination and increases to a peak level when seedlings are established.</text>
</comment>
<comment type="induction">
    <text evidence="5">By light.</text>
</comment>
<comment type="domain">
    <text evidence="15">EF-hands 1 and 4 have been shown to bind calcium. It is not known if EF-hands 2 and 3 are capable of calcium-binding. The N-terminal 22 amino acids are necessary and sufficient for vacuolar membrane targeting.</text>
</comment>
<comment type="PTM">
    <text evidence="15">S-acylated in vivo by PAT10. The ratio of acylation by either palmitate or stearate between Cys-4, Cys-12 and Cys-18 is unknown.</text>
</comment>
<comment type="disruption phenotype">
    <text evidence="15 16 17">No visible phenotype when grown under normal conditions; due to partial redundancy with CLB3. Chlorotic symptoms under low-K(+) stress. Clb2 and cbl3 double mutants show stunted growth, reduced fertility and necrotic lesions at leaf tips. They have also a reduced vacuolar H(+)-ATPase activity, are hypersensitive to excessive metal ions and are more tolerant to low-K(+) conditions.</text>
</comment>
<comment type="miscellaneous">
    <text>Blockage of vesicle trafficking by Brefeldin-A does not affect S-acylation and vacuolar membrane targeting of CBL2.</text>
</comment>
<comment type="similarity">
    <text evidence="20">Belongs to the calcineurin regulatory subunit family.</text>
</comment>
<feature type="chain" id="PRO_0000073503" description="Calcineurin B-like protein 2">
    <location>
        <begin position="1"/>
        <end position="226"/>
    </location>
</feature>
<feature type="domain" description="EF-hand 1" evidence="20">
    <location>
        <begin position="36"/>
        <end position="81"/>
    </location>
</feature>
<feature type="domain" description="EF-hand 2" evidence="2">
    <location>
        <begin position="82"/>
        <end position="117"/>
    </location>
</feature>
<feature type="domain" description="EF-hand 3" evidence="2">
    <location>
        <begin position="119"/>
        <end position="154"/>
    </location>
</feature>
<feature type="domain" description="EF-hand 4" evidence="2">
    <location>
        <begin position="163"/>
        <end position="198"/>
    </location>
</feature>
<feature type="site" description="Involved in dimerization" evidence="1">
    <location>
        <position position="155"/>
    </location>
</feature>
<feature type="modified residue" description="Phosphoserine; by CIPK11 and CIPK14" evidence="14">
    <location>
        <position position="216"/>
    </location>
</feature>
<feature type="lipid moiety-binding region" description="S-palmitoyl cysteine" evidence="15">
    <location>
        <position position="4"/>
    </location>
</feature>
<feature type="lipid moiety-binding region" description="S-palmitoyl cysteine" evidence="15">
    <location>
        <position position="12"/>
    </location>
</feature>
<feature type="lipid moiety-binding region" description="S-palmitoyl cysteine" evidence="15">
    <location>
        <position position="18"/>
    </location>
</feature>
<feature type="mutagenesis site" description="No effect on tonoplast targeting." evidence="15">
    <original>Q</original>
    <variation>E</variation>
    <location>
        <position position="3"/>
    </location>
</feature>
<feature type="mutagenesis site" description="Loss of tonoplast targeting. Loss of tonoplast targeting; when associated with S-12 and S-18." evidence="15">
    <original>C</original>
    <variation>S</variation>
    <location>
        <position position="4"/>
    </location>
</feature>
<feature type="mutagenesis site" description="Decreased tonoplast targeting. Loss of tonoplast targeting; when associated with S-18. Loss of tonoplast targeting; when associated with S-4 and S-18." evidence="15">
    <original>C</original>
    <variation>S</variation>
    <location>
        <position position="12"/>
    </location>
</feature>
<feature type="mutagenesis site" description="Loss of tonoplast targeting. Loss of tonoplast targeting; when associated with S-12. Loss of tonoplast targeting; when associated with S-4 and S-12." evidence="15">
    <original>C</original>
    <variation>S</variation>
    <location>
        <position position="18"/>
    </location>
</feature>
<feature type="mutagenesis site" description="No effect on binding to CIPK14." evidence="10">
    <original>E</original>
    <variation>A</variation>
    <location>
        <position position="71"/>
    </location>
</feature>
<feature type="mutagenesis site" description="No effect on binding to CIPK14." evidence="10">
    <original>E</original>
    <variation>A</variation>
    <location>
        <position position="106"/>
    </location>
</feature>
<feature type="mutagenesis site" description="No effect on binding to CIPK14." evidence="10">
    <original>E</original>
    <variation>A</variation>
    <location>
        <position position="143"/>
    </location>
</feature>
<feature type="mutagenesis site" description="No effect on binding to CIPK14." evidence="10">
    <original>E</original>
    <variation>A</variation>
    <location>
        <position position="187"/>
    </location>
</feature>
<feature type="mutagenesis site" description="Loss of phosphorylation." evidence="14">
    <original>S</original>
    <variation>A</variation>
    <location>
        <position position="216"/>
    </location>
</feature>
<feature type="mutagenesis site" description="Increased interaction with CIPK11." evidence="14">
    <original>S</original>
    <variation>D</variation>
    <location>
        <position position="216"/>
    </location>
</feature>
<feature type="sequence conflict" description="In Ref. 5; AAM65177." evidence="20" ref="5">
    <original>M</original>
    <variation>V</variation>
    <location>
        <position position="202"/>
    </location>
</feature>
<feature type="helix" evidence="22">
    <location>
        <begin position="34"/>
        <end position="39"/>
    </location>
</feature>
<feature type="helix" evidence="22">
    <location>
        <begin position="44"/>
        <end position="58"/>
    </location>
</feature>
<feature type="strand" evidence="22">
    <location>
        <begin position="60"/>
        <end position="62"/>
    </location>
</feature>
<feature type="strand" evidence="22">
    <location>
        <begin position="64"/>
        <end position="67"/>
    </location>
</feature>
<feature type="helix" evidence="22">
    <location>
        <begin position="69"/>
        <end position="77"/>
    </location>
</feature>
<feature type="turn" evidence="21">
    <location>
        <begin position="81"/>
        <end position="83"/>
    </location>
</feature>
<feature type="helix" evidence="22">
    <location>
        <begin position="85"/>
        <end position="94"/>
    </location>
</feature>
<feature type="strand" evidence="22">
    <location>
        <begin position="99"/>
        <end position="102"/>
    </location>
</feature>
<feature type="helix" evidence="22">
    <location>
        <begin position="104"/>
        <end position="113"/>
    </location>
</feature>
<feature type="helix" evidence="22">
    <location>
        <begin position="120"/>
        <end position="131"/>
    </location>
</feature>
<feature type="strand" evidence="22">
    <location>
        <begin position="135"/>
        <end position="140"/>
    </location>
</feature>
<feature type="helix" evidence="22">
    <location>
        <begin position="141"/>
        <end position="154"/>
    </location>
</feature>
<feature type="helix" evidence="22">
    <location>
        <begin position="161"/>
        <end position="175"/>
    </location>
</feature>
<feature type="strand" evidence="22">
    <location>
        <begin position="180"/>
        <end position="183"/>
    </location>
</feature>
<feature type="helix" evidence="22">
    <location>
        <begin position="185"/>
        <end position="194"/>
    </location>
</feature>
<feature type="helix" evidence="22">
    <location>
        <begin position="196"/>
        <end position="202"/>
    </location>
</feature>
<feature type="helix" evidence="22">
    <location>
        <begin position="205"/>
        <end position="209"/>
    </location>
</feature>
<feature type="helix" evidence="22">
    <location>
        <begin position="210"/>
        <end position="213"/>
    </location>
</feature>
<keyword id="KW-0002">3D-structure</keyword>
<keyword id="KW-0449">Lipoprotein</keyword>
<keyword id="KW-0472">Membrane</keyword>
<keyword id="KW-0564">Palmitate</keyword>
<keyword id="KW-0597">Phosphoprotein</keyword>
<keyword id="KW-1185">Reference proteome</keyword>
<keyword id="KW-0677">Repeat</keyword>
<keyword id="KW-0926">Vacuole</keyword>
<reference key="1">
    <citation type="journal article" date="1999" name="Proc. Natl. Acad. Sci. U.S.A.">
        <title>Genes for calcineurin B-like proteins in Arabidopsis are differentially regulated by stress signals.</title>
        <authorList>
            <person name="Kudla J."/>
            <person name="Xu Q."/>
            <person name="Harter K."/>
            <person name="Gruissem W."/>
            <person name="Luan S."/>
        </authorList>
    </citation>
    <scope>NUCLEOTIDE SEQUENCE [MRNA]</scope>
    <scope>TISSUE SPECIFICITY</scope>
    <source>
        <strain>cv. Columbia</strain>
    </source>
</reference>
<reference key="2">
    <citation type="journal article" date="1998" name="DNA Res.">
        <title>Structural analysis of Arabidopsis thaliana chromosome 5. V. Sequence features of the regions of 1,381,565 bp covered by twenty one physically assigned P1 and TAC clones.</title>
        <authorList>
            <person name="Kaneko T."/>
            <person name="Kotani H."/>
            <person name="Nakamura Y."/>
            <person name="Sato S."/>
            <person name="Asamizu E."/>
            <person name="Miyajima N."/>
            <person name="Tabata S."/>
        </authorList>
    </citation>
    <scope>NUCLEOTIDE SEQUENCE [LARGE SCALE GENOMIC DNA]</scope>
    <source>
        <strain>cv. Columbia</strain>
    </source>
</reference>
<reference key="3">
    <citation type="journal article" date="2017" name="Plant J.">
        <title>Araport11: a complete reannotation of the Arabidopsis thaliana reference genome.</title>
        <authorList>
            <person name="Cheng C.Y."/>
            <person name="Krishnakumar V."/>
            <person name="Chan A.P."/>
            <person name="Thibaud-Nissen F."/>
            <person name="Schobel S."/>
            <person name="Town C.D."/>
        </authorList>
    </citation>
    <scope>GENOME REANNOTATION</scope>
    <source>
        <strain>cv. Columbia</strain>
    </source>
</reference>
<reference key="4">
    <citation type="journal article" date="2003" name="Science">
        <title>Empirical analysis of transcriptional activity in the Arabidopsis genome.</title>
        <authorList>
            <person name="Yamada K."/>
            <person name="Lim J."/>
            <person name="Dale J.M."/>
            <person name="Chen H."/>
            <person name="Shinn P."/>
            <person name="Palm C.J."/>
            <person name="Southwick A.M."/>
            <person name="Wu H.C."/>
            <person name="Kim C.J."/>
            <person name="Nguyen M."/>
            <person name="Pham P.K."/>
            <person name="Cheuk R.F."/>
            <person name="Karlin-Newmann G."/>
            <person name="Liu S.X."/>
            <person name="Lam B."/>
            <person name="Sakano H."/>
            <person name="Wu T."/>
            <person name="Yu G."/>
            <person name="Miranda M."/>
            <person name="Quach H.L."/>
            <person name="Tripp M."/>
            <person name="Chang C.H."/>
            <person name="Lee J.M."/>
            <person name="Toriumi M.J."/>
            <person name="Chan M.M."/>
            <person name="Tang C.C."/>
            <person name="Onodera C.S."/>
            <person name="Deng J.M."/>
            <person name="Akiyama K."/>
            <person name="Ansari Y."/>
            <person name="Arakawa T."/>
            <person name="Banh J."/>
            <person name="Banno F."/>
            <person name="Bowser L."/>
            <person name="Brooks S.Y."/>
            <person name="Carninci P."/>
            <person name="Chao Q."/>
            <person name="Choy N."/>
            <person name="Enju A."/>
            <person name="Goldsmith A.D."/>
            <person name="Gurjal M."/>
            <person name="Hansen N.F."/>
            <person name="Hayashizaki Y."/>
            <person name="Johnson-Hopson C."/>
            <person name="Hsuan V.W."/>
            <person name="Iida K."/>
            <person name="Karnes M."/>
            <person name="Khan S."/>
            <person name="Koesema E."/>
            <person name="Ishida J."/>
            <person name="Jiang P.X."/>
            <person name="Jones T."/>
            <person name="Kawai J."/>
            <person name="Kamiya A."/>
            <person name="Meyers C."/>
            <person name="Nakajima M."/>
            <person name="Narusaka M."/>
            <person name="Seki M."/>
            <person name="Sakurai T."/>
            <person name="Satou M."/>
            <person name="Tamse R."/>
            <person name="Vaysberg M."/>
            <person name="Wallender E.K."/>
            <person name="Wong C."/>
            <person name="Yamamura Y."/>
            <person name="Yuan S."/>
            <person name="Shinozaki K."/>
            <person name="Davis R.W."/>
            <person name="Theologis A."/>
            <person name="Ecker J.R."/>
        </authorList>
    </citation>
    <scope>NUCLEOTIDE SEQUENCE [LARGE SCALE MRNA]</scope>
    <source>
        <strain>cv. Columbia</strain>
    </source>
</reference>
<reference key="5">
    <citation type="submission" date="2002-03" db="EMBL/GenBank/DDBJ databases">
        <title>Full-length cDNA from Arabidopsis thaliana.</title>
        <authorList>
            <person name="Brover V.V."/>
            <person name="Troukhan M.E."/>
            <person name="Alexandrov N.A."/>
            <person name="Lu Y.-P."/>
            <person name="Flavell R.B."/>
            <person name="Feldmann K.A."/>
        </authorList>
    </citation>
    <scope>NUCLEOTIDE SEQUENCE [LARGE SCALE MRNA]</scope>
</reference>
<reference key="6">
    <citation type="journal article" date="2001" name="EMBO J.">
        <title>The NAF domain defines a novel protein-protein interaction module conserved in Ca(2+)-regulated kinases.</title>
        <authorList>
            <person name="Albrecht V."/>
            <person name="Ritz O."/>
            <person name="Linder S."/>
            <person name="Harter K."/>
            <person name="Kudla J."/>
        </authorList>
    </citation>
    <scope>INTERACTION WITH CIPK1; CIPK2; CIPK4; CIPK6; CIPK7; CIPK9; CIPK11; CIPK12 AND CIPK13</scope>
</reference>
<reference key="7">
    <citation type="journal article" date="2001" name="Plant Cell Physiol.">
        <title>An Arabidopsis SNF1-related protein kinase, AtSR1, interacts with a calcium-binding protein, AtCBL2, of which transcripts respond to light.</title>
        <authorList>
            <person name="Nozawa A."/>
            <person name="Koizumi N."/>
            <person name="Sano H."/>
        </authorList>
    </citation>
    <scope>INDUCTION</scope>
    <scope>TISSUE SPECIFICITY</scope>
    <scope>INTERACTION WITH CIPK14</scope>
</reference>
<reference key="8">
    <citation type="journal article" date="2004" name="Plant Physiol.">
        <title>Calcium sensors and their interacting protein kinases: genomics of the Arabidopsis and rice CBL-CIPK signaling networks.</title>
        <authorList>
            <person name="Kolukisaoglu U."/>
            <person name="Weinl S."/>
            <person name="Blazevic D."/>
            <person name="Batistic O."/>
            <person name="Kudla J."/>
        </authorList>
    </citation>
    <scope>GENE FAMILY</scope>
</reference>
<reference key="9">
    <citation type="journal article" date="2006" name="Cell">
        <title>A protein kinase, interacting with two calcineurin B-like proteins, regulates K+ transporter AKT1 in Arabidopsis.</title>
        <authorList>
            <person name="Xu J."/>
            <person name="Li H.-D."/>
            <person name="Chen L.-Q."/>
            <person name="Wang Y."/>
            <person name="Liu L.-L."/>
            <person name="He L."/>
            <person name="Wu W.-H."/>
        </authorList>
    </citation>
    <scope>INTERACTION WITH CIPK23</scope>
</reference>
<reference key="10">
    <citation type="journal article" date="2007" name="Plant Cell">
        <title>Arabidopsis protein kinase PKS5 inhibits the plasma membrane H+ -ATPase by preventing interaction with 14-3-3 protein.</title>
        <authorList>
            <person name="Fuglsang A.T."/>
            <person name="Guo Y."/>
            <person name="Cuin T.A."/>
            <person name="Qiu Q."/>
            <person name="Song C."/>
            <person name="Kristiansen K.A."/>
            <person name="Bych K."/>
            <person name="Schulz A."/>
            <person name="Shabala S."/>
            <person name="Schumaker K.S."/>
            <person name="Palmgren M.G."/>
            <person name="Zhu J.K."/>
        </authorList>
    </citation>
    <scope>FUNCTION</scope>
    <scope>INTERACTION WITH CIPK11</scope>
    <scope>CALCIUM-BINDING</scope>
</reference>
<reference key="11">
    <citation type="journal article" date="2007" name="Proc. Natl. Acad. Sci. U.S.A.">
        <title>A protein phosphorylation/dephosphorylation network regulates a plant potassium channel.</title>
        <authorList>
            <person name="Lee S.-C."/>
            <person name="Lan W.-Z."/>
            <person name="Kim B.-G."/>
            <person name="Li L."/>
            <person name="Cheong Y.H."/>
            <person name="Pandey G.K."/>
            <person name="Lu G."/>
            <person name="Buchanan B.B."/>
            <person name="Luan S."/>
        </authorList>
    </citation>
    <scope>FUNCTION</scope>
    <scope>INTERACTION WITH CIPK6; CIPK16 AND CIPK23</scope>
</reference>
<reference key="12">
    <citation type="journal article" date="2008" name="Plant Cell">
        <title>Dual fatty acyl modification determines the localization and plasma membrane targeting of CBL/CIPK Ca2+ signaling complexes in Arabidopsis.</title>
        <authorList>
            <person name="Batistic O."/>
            <person name="Sorek N."/>
            <person name="Schueltke S."/>
            <person name="Yalovsky S."/>
            <person name="Kudla J."/>
        </authorList>
    </citation>
    <scope>SUBCELLULAR LOCATION</scope>
</reference>
<reference key="13">
    <citation type="journal article" date="2010" name="Plant J.">
        <title>CBL-mediated targeting of CIPKs facilitates the decoding of calcium signals emanating from distinct cellular stores.</title>
        <authorList>
            <person name="Batistic O."/>
            <person name="Waadt R."/>
            <person name="Steinhorst L."/>
            <person name="Held K."/>
            <person name="Kudla J."/>
        </authorList>
    </citation>
    <scope>SUBCELLULAR LOCATION</scope>
    <scope>INTERACTION WITH CIPK14 AND CIPK24</scope>
</reference>
<reference key="14">
    <citation type="journal article" date="2011" name="Mol. Plant">
        <title>Mechanistic analysis of AKT1 regulation by the CBL-CIPK-PP2CA interactions.</title>
        <authorList>
            <person name="Lan W.Z."/>
            <person name="Lee S.C."/>
            <person name="Che Y.F."/>
            <person name="Jiang Y.Q."/>
            <person name="Luan S."/>
        </authorList>
    </citation>
    <scope>INTERACTION WITH PP2CA</scope>
</reference>
<reference key="15">
    <citation type="journal article" date="2011" name="Plant Physiol.">
        <title>Phosphorylation of SOS3-like calcium-binding proteins by their interacting SOS2-like protein kinases is a common regulatory mechanism in Arabidopsis.</title>
        <authorList>
            <person name="Du W."/>
            <person name="Lin H."/>
            <person name="Chen S."/>
            <person name="Wu Y."/>
            <person name="Zhang J."/>
            <person name="Fuglsang A.T."/>
            <person name="Palmgren M.G."/>
            <person name="Wu W."/>
            <person name="Guo Y."/>
        </authorList>
    </citation>
    <scope>PHOSPHORYLATION AT SER-216</scope>
    <scope>MUTAGENESIS OF SER-216</scope>
    <scope>INTERACTION WITH CIPK11 AND CIPK14</scope>
</reference>
<reference key="16">
    <citation type="journal article" date="2012" name="Cell Res.">
        <title>S-acylation-dependent association of the calcium sensor CBL2 with the vacuolar membrane is essential for proper abscisic acid responses.</title>
        <authorList>
            <person name="Batistic O."/>
            <person name="Rehers M."/>
            <person name="Akerman A."/>
            <person name="Schluecking K."/>
            <person name="Steinhorst L."/>
            <person name="Yalovsky S."/>
            <person name="Kudla J."/>
        </authorList>
    </citation>
    <scope>FUNCTION</scope>
    <scope>MUTAGENESIS OF GLN-3; CYS-4; CYS-12 AND CYS-18</scope>
    <scope>PALMITOYLATION AT CYS-4; CYS-12 AND CYS-18</scope>
    <scope>SUBCELLULAR LOCATION</scope>
    <scope>DOMAIN</scope>
    <scope>DISRUPTION PHENOTYPE</scope>
</reference>
<reference key="17">
    <citation type="journal article" date="2012" name="Cell Res.">
        <title>Tonoplast calcium sensors CBL2 and CBL3 control plant growth and ion homeostasis through regulating V-ATPase activity in Arabidopsis.</title>
        <authorList>
            <person name="Tang R.J."/>
            <person name="Liu H."/>
            <person name="Yang Y."/>
            <person name="Yang L."/>
            <person name="Gao X.S."/>
            <person name="Garcia V.J."/>
            <person name="Luan S."/>
            <person name="Zhang H.X."/>
        </authorList>
    </citation>
    <scope>DEVELOPMENTAL STAGE</scope>
    <scope>TISSUE SPECIFICITY</scope>
    <scope>SUBCELLULAR LOCATION</scope>
    <scope>CALCIUM-BINDING</scope>
    <scope>DISRUPTION PHENOTYPE</scope>
</reference>
<reference key="18">
    <citation type="journal article" date="2013" name="Plant Cell">
        <title>Protein S-acyl transferase10 is critical for development and salt tolerance in Arabidopsis.</title>
        <authorList>
            <person name="Zhou L.Z."/>
            <person name="Li S."/>
            <person name="Feng Q.N."/>
            <person name="Zhang Y.L."/>
            <person name="Zhao X."/>
            <person name="Zeng Y.L."/>
            <person name="Wang H."/>
            <person name="Jiang L."/>
            <person name="Zhang Y."/>
        </authorList>
    </citation>
    <scope>SUBCELLULAR LOCATION</scope>
    <scope>S-ACYLATION</scope>
</reference>
<reference key="19">
    <citation type="journal article" date="2013" name="Plant Physiol.">
        <title>A protein kinase, calcineurin B-like protein-interacting protein Kinase9, interacts with calcium sensor calcineurin B-like Protein3 and regulates potassium homeostasis under low-potassium stress in Arabidopsis.</title>
        <authorList>
            <person name="Liu L.L."/>
            <person name="Ren H.M."/>
            <person name="Chen L.Q."/>
            <person name="Wang Y."/>
            <person name="Wu W.H."/>
        </authorList>
    </citation>
    <scope>INTERACTION WITH CIPK9</scope>
    <scope>TISSUE SPECIFICITY</scope>
    <scope>SUBCELLULAR LOCATION</scope>
    <scope>DISRUPTION PHENOTYPE</scope>
</reference>
<reference key="20">
    <citation type="journal article" date="2014" name="Biochem. Biophys. Res. Commun.">
        <title>Arabidopsis CIPK14 positively regulates glucose response.</title>
        <authorList>
            <person name="Yan J."/>
            <person name="Niu F."/>
            <person name="Liu W.Z."/>
            <person name="Zhang H."/>
            <person name="Wang B."/>
            <person name="Lan W."/>
            <person name="Che Y."/>
            <person name="Yang B."/>
            <person name="Luan S."/>
            <person name="Jiang Y.Q."/>
        </authorList>
    </citation>
    <scope>INTERACTION WITH CIPK14</scope>
</reference>
<reference key="21">
    <citation type="journal article" date="2003" name="J. Biol. Chem.">
        <title>The crystal structure of the novel calcium-binding protein AtCBL2 from Arabidopsis thaliana.</title>
        <authorList>
            <person name="Nagae M."/>
            <person name="Nozawa A."/>
            <person name="Koizumi N."/>
            <person name="Sano H."/>
            <person name="Hashimoto H."/>
            <person name="Sato M."/>
            <person name="Shimizu T."/>
        </authorList>
    </citation>
    <scope>X-RAY CRYSTALLOGRAPHY (2.1 ANGSTROMS) OF 32-220 IN COMPLEX WITH CALCIUM</scope>
</reference>
<reference key="22">
    <citation type="journal article" date="2008" name="J. Mol. Biol.">
        <title>The crystal structure of plant-specific calcium-binding protein AtCBL2 in complex with the regulatory domain of AtCIPK14.</title>
        <authorList>
            <person name="Akaboshi M."/>
            <person name="Hashimoto H."/>
            <person name="Ishida H."/>
            <person name="Saijo S."/>
            <person name="Koizumi N."/>
            <person name="Sato M."/>
            <person name="Shimizu T."/>
        </authorList>
    </citation>
    <scope>X-RAY CRYSTALLOGRAPHY (1.20 ANGSTROMS) IN COMPLEX WITH THE REGULATORY DOMAIN OF CIPK14 AND CALCIUM</scope>
    <scope>MUTAGENESIS OF GLU-71; GLU-106; GLU-143 AND GLU-187</scope>
</reference>